<organism>
    <name type="scientific">Salmonella schwarzengrund (strain CVM19633)</name>
    <dbReference type="NCBI Taxonomy" id="439843"/>
    <lineage>
        <taxon>Bacteria</taxon>
        <taxon>Pseudomonadati</taxon>
        <taxon>Pseudomonadota</taxon>
        <taxon>Gammaproteobacteria</taxon>
        <taxon>Enterobacterales</taxon>
        <taxon>Enterobacteriaceae</taxon>
        <taxon>Salmonella</taxon>
    </lineage>
</organism>
<keyword id="KW-0131">Cell cycle</keyword>
<keyword id="KW-0132">Cell division</keyword>
<keyword id="KW-0963">Cytoplasm</keyword>
<keyword id="KW-0717">Septation</keyword>
<proteinExistence type="inferred from homology"/>
<accession>B4TXI8</accession>
<sequence length="247" mass="28426">MHTQVLFEHPLNEKMRTWLRIEFLIQQLSINLPIADHAGALHFFRNISDLLDVFERGEVRTELLKELERQQRKLQAWVEVPGVDQDRIEALRQQLKSAGSVLISAPRIGQQLREDRLIALVRQRLSIPGGCCSFDLPTLHIWLHLQQAQRDAQIESWLASLNPLTQALTLVLDLIRNSAPFRKQTSLNGFYQDNGDDADLLRLMLTLDSQLYPQISGHKSRFAIRFMPLDSENGLVPERLDFELACC</sequence>
<comment type="function">
    <text evidence="1">Cell division factor that enhances FtsZ-ring assembly. Directly interacts with FtsZ and promotes bundling of FtsZ protofilaments, with a reduction in FtsZ GTPase activity.</text>
</comment>
<comment type="subunit">
    <text evidence="1">Interacts with FtsZ.</text>
</comment>
<comment type="subcellular location">
    <subcellularLocation>
        <location evidence="1">Cytoplasm</location>
    </subcellularLocation>
    <text evidence="1">Localizes to mid-cell in an FtsZ-dependent manner.</text>
</comment>
<comment type="similarity">
    <text evidence="1">Belongs to the ZapD family.</text>
</comment>
<evidence type="ECO:0000255" key="1">
    <source>
        <dbReference type="HAMAP-Rule" id="MF_01092"/>
    </source>
</evidence>
<reference key="1">
    <citation type="journal article" date="2011" name="J. Bacteriol.">
        <title>Comparative genomics of 28 Salmonella enterica isolates: evidence for CRISPR-mediated adaptive sublineage evolution.</title>
        <authorList>
            <person name="Fricke W.F."/>
            <person name="Mammel M.K."/>
            <person name="McDermott P.F."/>
            <person name="Tartera C."/>
            <person name="White D.G."/>
            <person name="Leclerc J.E."/>
            <person name="Ravel J."/>
            <person name="Cebula T.A."/>
        </authorList>
    </citation>
    <scope>NUCLEOTIDE SEQUENCE [LARGE SCALE GENOMIC DNA]</scope>
    <source>
        <strain>CVM19633</strain>
    </source>
</reference>
<feature type="chain" id="PRO_1000136955" description="Cell division protein ZapD">
    <location>
        <begin position="1"/>
        <end position="247"/>
    </location>
</feature>
<name>ZAPD_SALSV</name>
<protein>
    <recommendedName>
        <fullName evidence="1">Cell division protein ZapD</fullName>
    </recommendedName>
    <alternativeName>
        <fullName evidence="1">Z ring-associated protein D</fullName>
    </alternativeName>
</protein>
<dbReference type="EMBL" id="CP001127">
    <property type="protein sequence ID" value="ACF91923.1"/>
    <property type="molecule type" value="Genomic_DNA"/>
</dbReference>
<dbReference type="RefSeq" id="WP_000557441.1">
    <property type="nucleotide sequence ID" value="NC_011094.1"/>
</dbReference>
<dbReference type="SMR" id="B4TXI8"/>
<dbReference type="KEGG" id="sew:SeSA_A0156"/>
<dbReference type="HOGENOM" id="CLU_076303_0_0_6"/>
<dbReference type="Proteomes" id="UP000001865">
    <property type="component" value="Chromosome"/>
</dbReference>
<dbReference type="GO" id="GO:0032153">
    <property type="term" value="C:cell division site"/>
    <property type="evidence" value="ECO:0007669"/>
    <property type="project" value="TreeGrafter"/>
</dbReference>
<dbReference type="GO" id="GO:0005737">
    <property type="term" value="C:cytoplasm"/>
    <property type="evidence" value="ECO:0007669"/>
    <property type="project" value="UniProtKB-SubCell"/>
</dbReference>
<dbReference type="GO" id="GO:0000917">
    <property type="term" value="P:division septum assembly"/>
    <property type="evidence" value="ECO:0007669"/>
    <property type="project" value="UniProtKB-KW"/>
</dbReference>
<dbReference type="GO" id="GO:0043093">
    <property type="term" value="P:FtsZ-dependent cytokinesis"/>
    <property type="evidence" value="ECO:0007669"/>
    <property type="project" value="UniProtKB-UniRule"/>
</dbReference>
<dbReference type="FunFam" id="1.10.3900.10:FF:000001">
    <property type="entry name" value="Cell division protein ZapD"/>
    <property type="match status" value="1"/>
</dbReference>
<dbReference type="FunFam" id="2.60.440.10:FF:000001">
    <property type="entry name" value="Cell division protein ZapD"/>
    <property type="match status" value="1"/>
</dbReference>
<dbReference type="Gene3D" id="1.10.3900.10">
    <property type="entry name" value="YacF-like"/>
    <property type="match status" value="1"/>
</dbReference>
<dbReference type="Gene3D" id="2.60.440.10">
    <property type="entry name" value="YacF-like domains"/>
    <property type="match status" value="1"/>
</dbReference>
<dbReference type="HAMAP" id="MF_01092">
    <property type="entry name" value="ZapD"/>
    <property type="match status" value="1"/>
</dbReference>
<dbReference type="InterPro" id="IPR009777">
    <property type="entry name" value="ZapD"/>
</dbReference>
<dbReference type="InterPro" id="IPR027462">
    <property type="entry name" value="ZapD_C"/>
</dbReference>
<dbReference type="InterPro" id="IPR036268">
    <property type="entry name" value="ZapD_sf"/>
</dbReference>
<dbReference type="NCBIfam" id="NF003653">
    <property type="entry name" value="PRK05287.1-1"/>
    <property type="match status" value="1"/>
</dbReference>
<dbReference type="NCBIfam" id="NF003655">
    <property type="entry name" value="PRK05287.1-3"/>
    <property type="match status" value="1"/>
</dbReference>
<dbReference type="PANTHER" id="PTHR39455">
    <property type="entry name" value="CELL DIVISION PROTEIN ZAPD"/>
    <property type="match status" value="1"/>
</dbReference>
<dbReference type="PANTHER" id="PTHR39455:SF1">
    <property type="entry name" value="CELL DIVISION PROTEIN ZAPD"/>
    <property type="match status" value="1"/>
</dbReference>
<dbReference type="Pfam" id="PF07072">
    <property type="entry name" value="ZapD"/>
    <property type="match status" value="1"/>
</dbReference>
<dbReference type="SUPFAM" id="SSF160950">
    <property type="entry name" value="YacF-like"/>
    <property type="match status" value="1"/>
</dbReference>
<gene>
    <name evidence="1" type="primary">zapD</name>
    <name type="ordered locus">SeSA_A0156</name>
</gene>